<sequence>MVIKAQSPAGFAEEYIIESIWNNRFPPGTILPAERELSELIGVTRTTLREVLQRLARDGWLTIQHGKPTKVNNFWETSGLNILETLARLDHESVPQLIDNLLSVRTNISTIFIRTALRQHPDKAQEVLATAHEVADHADAFADLDYNIFRGLAFASGNPIYGLILNGMKGLYTRIGRHYFANPEARSLALGFYHKLSSLCEQGAHDQVYETVRRYGHDSGEIWHRMQKNLPGDLAIQGR</sequence>
<dbReference type="EMBL" id="CP000026">
    <property type="protein sequence ID" value="AAV77039.1"/>
    <property type="molecule type" value="Genomic_DNA"/>
</dbReference>
<dbReference type="RefSeq" id="WP_000234826.1">
    <property type="nucleotide sequence ID" value="NC_006511.1"/>
</dbReference>
<dbReference type="SMR" id="Q5PCU3"/>
<dbReference type="KEGG" id="spt:SPA1068"/>
<dbReference type="HOGENOM" id="CLU_017584_9_4_6"/>
<dbReference type="Proteomes" id="UP000008185">
    <property type="component" value="Chromosome"/>
</dbReference>
<dbReference type="GO" id="GO:0005737">
    <property type="term" value="C:cytoplasm"/>
    <property type="evidence" value="ECO:0007669"/>
    <property type="project" value="UniProtKB-SubCell"/>
</dbReference>
<dbReference type="GO" id="GO:0003677">
    <property type="term" value="F:DNA binding"/>
    <property type="evidence" value="ECO:0007669"/>
    <property type="project" value="UniProtKB-KW"/>
</dbReference>
<dbReference type="GO" id="GO:0003700">
    <property type="term" value="F:DNA-binding transcription factor activity"/>
    <property type="evidence" value="ECO:0007669"/>
    <property type="project" value="UniProtKB-UniRule"/>
</dbReference>
<dbReference type="GO" id="GO:0000062">
    <property type="term" value="F:fatty-acyl-CoA binding"/>
    <property type="evidence" value="ECO:0007669"/>
    <property type="project" value="InterPro"/>
</dbReference>
<dbReference type="GO" id="GO:0006631">
    <property type="term" value="P:fatty acid metabolic process"/>
    <property type="evidence" value="ECO:0007669"/>
    <property type="project" value="UniProtKB-KW"/>
</dbReference>
<dbReference type="GO" id="GO:0019217">
    <property type="term" value="P:regulation of fatty acid metabolic process"/>
    <property type="evidence" value="ECO:0007669"/>
    <property type="project" value="UniProtKB-UniRule"/>
</dbReference>
<dbReference type="CDD" id="cd07377">
    <property type="entry name" value="WHTH_GntR"/>
    <property type="match status" value="1"/>
</dbReference>
<dbReference type="FunFam" id="1.10.10.10:FF:000036">
    <property type="entry name" value="Fatty acid metabolism regulator protein"/>
    <property type="match status" value="1"/>
</dbReference>
<dbReference type="FunFam" id="1.20.120.530:FF:000003">
    <property type="entry name" value="Fatty acid metabolism regulator protein"/>
    <property type="match status" value="1"/>
</dbReference>
<dbReference type="Gene3D" id="1.20.120.530">
    <property type="entry name" value="GntR ligand-binding domain-like"/>
    <property type="match status" value="1"/>
</dbReference>
<dbReference type="Gene3D" id="1.10.10.10">
    <property type="entry name" value="Winged helix-like DNA-binding domain superfamily/Winged helix DNA-binding domain"/>
    <property type="match status" value="1"/>
</dbReference>
<dbReference type="HAMAP" id="MF_00696">
    <property type="entry name" value="HTH_FadR"/>
    <property type="match status" value="1"/>
</dbReference>
<dbReference type="InterPro" id="IPR014178">
    <property type="entry name" value="FA-response_TF_FadR"/>
</dbReference>
<dbReference type="InterPro" id="IPR028374">
    <property type="entry name" value="FadR_C"/>
</dbReference>
<dbReference type="InterPro" id="IPR008920">
    <property type="entry name" value="TF_FadR/GntR_C"/>
</dbReference>
<dbReference type="InterPro" id="IPR000524">
    <property type="entry name" value="Tscrpt_reg_HTH_GntR"/>
</dbReference>
<dbReference type="InterPro" id="IPR036388">
    <property type="entry name" value="WH-like_DNA-bd_sf"/>
</dbReference>
<dbReference type="InterPro" id="IPR036390">
    <property type="entry name" value="WH_DNA-bd_sf"/>
</dbReference>
<dbReference type="NCBIfam" id="TIGR02812">
    <property type="entry name" value="fadR_gamma"/>
    <property type="match status" value="1"/>
</dbReference>
<dbReference type="NCBIfam" id="NF003444">
    <property type="entry name" value="PRK04984.1"/>
    <property type="match status" value="1"/>
</dbReference>
<dbReference type="PANTHER" id="PTHR43537:SF52">
    <property type="entry name" value="FATTY ACID METABOLISM REGULATOR PROTEIN"/>
    <property type="match status" value="1"/>
</dbReference>
<dbReference type="PANTHER" id="PTHR43537">
    <property type="entry name" value="TRANSCRIPTIONAL REGULATOR, GNTR FAMILY"/>
    <property type="match status" value="1"/>
</dbReference>
<dbReference type="Pfam" id="PF07840">
    <property type="entry name" value="FadR_C"/>
    <property type="match status" value="1"/>
</dbReference>
<dbReference type="Pfam" id="PF00392">
    <property type="entry name" value="GntR"/>
    <property type="match status" value="1"/>
</dbReference>
<dbReference type="PRINTS" id="PR00035">
    <property type="entry name" value="HTHGNTR"/>
</dbReference>
<dbReference type="SMART" id="SM00345">
    <property type="entry name" value="HTH_GNTR"/>
    <property type="match status" value="1"/>
</dbReference>
<dbReference type="SUPFAM" id="SSF48008">
    <property type="entry name" value="GntR ligand-binding domain-like"/>
    <property type="match status" value="1"/>
</dbReference>
<dbReference type="SUPFAM" id="SSF46785">
    <property type="entry name" value="Winged helix' DNA-binding domain"/>
    <property type="match status" value="1"/>
</dbReference>
<dbReference type="PROSITE" id="PS50949">
    <property type="entry name" value="HTH_GNTR"/>
    <property type="match status" value="1"/>
</dbReference>
<accession>Q5PCU3</accession>
<gene>
    <name evidence="1" type="primary">fadR</name>
    <name type="ordered locus">SPA1068</name>
</gene>
<evidence type="ECO:0000255" key="1">
    <source>
        <dbReference type="HAMAP-Rule" id="MF_00696"/>
    </source>
</evidence>
<comment type="function">
    <text evidence="1">Multifunctional regulator of fatty acid metabolism.</text>
</comment>
<comment type="subunit">
    <text evidence="1">Homodimer.</text>
</comment>
<comment type="subcellular location">
    <subcellularLocation>
        <location evidence="1">Cytoplasm</location>
    </subcellularLocation>
</comment>
<name>FADR_SALPA</name>
<feature type="chain" id="PRO_0000301507" description="Fatty acid metabolism regulator protein">
    <location>
        <begin position="1"/>
        <end position="239"/>
    </location>
</feature>
<feature type="domain" description="HTH gntR-type" evidence="1">
    <location>
        <begin position="6"/>
        <end position="74"/>
    </location>
</feature>
<feature type="DNA-binding region" description="H-T-H motif" evidence="1">
    <location>
        <begin position="34"/>
        <end position="53"/>
    </location>
</feature>
<reference key="1">
    <citation type="journal article" date="2004" name="Nat. Genet.">
        <title>Comparison of genome degradation in Paratyphi A and Typhi, human-restricted serovars of Salmonella enterica that cause typhoid.</title>
        <authorList>
            <person name="McClelland M."/>
            <person name="Sanderson K.E."/>
            <person name="Clifton S.W."/>
            <person name="Latreille P."/>
            <person name="Porwollik S."/>
            <person name="Sabo A."/>
            <person name="Meyer R."/>
            <person name="Bieri T."/>
            <person name="Ozersky P."/>
            <person name="McLellan M."/>
            <person name="Harkins C.R."/>
            <person name="Wang C."/>
            <person name="Nguyen C."/>
            <person name="Berghoff A."/>
            <person name="Elliott G."/>
            <person name="Kohlberg S."/>
            <person name="Strong C."/>
            <person name="Du F."/>
            <person name="Carter J."/>
            <person name="Kremizki C."/>
            <person name="Layman D."/>
            <person name="Leonard S."/>
            <person name="Sun H."/>
            <person name="Fulton L."/>
            <person name="Nash W."/>
            <person name="Miner T."/>
            <person name="Minx P."/>
            <person name="Delehaunty K."/>
            <person name="Fronick C."/>
            <person name="Magrini V."/>
            <person name="Nhan M."/>
            <person name="Warren W."/>
            <person name="Florea L."/>
            <person name="Spieth J."/>
            <person name="Wilson R.K."/>
        </authorList>
    </citation>
    <scope>NUCLEOTIDE SEQUENCE [LARGE SCALE GENOMIC DNA]</scope>
    <source>
        <strain>ATCC 9150 / SARB42</strain>
    </source>
</reference>
<keyword id="KW-0010">Activator</keyword>
<keyword id="KW-0963">Cytoplasm</keyword>
<keyword id="KW-0238">DNA-binding</keyword>
<keyword id="KW-0276">Fatty acid metabolism</keyword>
<keyword id="KW-0443">Lipid metabolism</keyword>
<keyword id="KW-0678">Repressor</keyword>
<keyword id="KW-0804">Transcription</keyword>
<keyword id="KW-0805">Transcription regulation</keyword>
<proteinExistence type="inferred from homology"/>
<organism>
    <name type="scientific">Salmonella paratyphi A (strain ATCC 9150 / SARB42)</name>
    <dbReference type="NCBI Taxonomy" id="295319"/>
    <lineage>
        <taxon>Bacteria</taxon>
        <taxon>Pseudomonadati</taxon>
        <taxon>Pseudomonadota</taxon>
        <taxon>Gammaproteobacteria</taxon>
        <taxon>Enterobacterales</taxon>
        <taxon>Enterobacteriaceae</taxon>
        <taxon>Salmonella</taxon>
    </lineage>
</organism>
<protein>
    <recommendedName>
        <fullName evidence="1">Fatty acid metabolism regulator protein</fullName>
    </recommendedName>
</protein>